<organism>
    <name type="scientific">Rhodopseudomonas palustris (strain ATCC BAA-98 / CGA009)</name>
    <dbReference type="NCBI Taxonomy" id="258594"/>
    <lineage>
        <taxon>Bacteria</taxon>
        <taxon>Pseudomonadati</taxon>
        <taxon>Pseudomonadota</taxon>
        <taxon>Alphaproteobacteria</taxon>
        <taxon>Hyphomicrobiales</taxon>
        <taxon>Nitrobacteraceae</taxon>
        <taxon>Rhodopseudomonas</taxon>
    </lineage>
</organism>
<protein>
    <recommendedName>
        <fullName evidence="1">Trans-aconitate 2-methyltransferase</fullName>
        <ecNumber evidence="1">2.1.1.144</ecNumber>
    </recommendedName>
</protein>
<evidence type="ECO:0000255" key="1">
    <source>
        <dbReference type="HAMAP-Rule" id="MF_00560"/>
    </source>
</evidence>
<comment type="function">
    <text evidence="1">Catalyzes the S-adenosylmethionine monomethyl esterification of trans-aconitate.</text>
</comment>
<comment type="catalytic activity">
    <reaction evidence="1">
        <text>trans-aconitate + S-adenosyl-L-methionine = (E)-3-(methoxycarbonyl)pent-2-enedioate + S-adenosyl-L-homocysteine</text>
        <dbReference type="Rhea" id="RHEA:14969"/>
        <dbReference type="ChEBI" id="CHEBI:15708"/>
        <dbReference type="ChEBI" id="CHEBI:57470"/>
        <dbReference type="ChEBI" id="CHEBI:57856"/>
        <dbReference type="ChEBI" id="CHEBI:59789"/>
        <dbReference type="EC" id="2.1.1.144"/>
    </reaction>
</comment>
<comment type="subcellular location">
    <subcellularLocation>
        <location evidence="1">Cytoplasm</location>
    </subcellularLocation>
</comment>
<comment type="similarity">
    <text evidence="1">Belongs to the methyltransferase superfamily. Tam family.</text>
</comment>
<proteinExistence type="inferred from homology"/>
<name>TAM_RHOPA</name>
<keyword id="KW-0963">Cytoplasm</keyword>
<keyword id="KW-0489">Methyltransferase</keyword>
<keyword id="KW-0949">S-adenosyl-L-methionine</keyword>
<keyword id="KW-0808">Transferase</keyword>
<sequence>MADWNAEQYLKFEDERTRPARDLLAQVPTTAPRKVADIGCGPGNSTALLVERWPEASVIGVDTSADMLRQARERLPQHKFIEANVAHWAPPAGTDVLFANAVFQWVPDHLKQLRRLLSGLDSGGVLAVQMPDNLDEPSHIMMREVALQEPWRHQLSKAAELRDTLPKPSVYYDALKPLCSRLEIWHTVYNHALDGPEAIVEWVKGTGLRPFIDPLELPERKTYLAAYTARIAAAYPAQADGQVLLRFPRIFIVAVK</sequence>
<dbReference type="EC" id="2.1.1.144" evidence="1"/>
<dbReference type="EMBL" id="BX572604">
    <property type="protein sequence ID" value="CAE29046.1"/>
    <property type="molecule type" value="Genomic_DNA"/>
</dbReference>
<dbReference type="RefSeq" id="WP_011159144.1">
    <property type="nucleotide sequence ID" value="NZ_CP116810.1"/>
</dbReference>
<dbReference type="SMR" id="Q6N3T8"/>
<dbReference type="STRING" id="258594.RPA3605"/>
<dbReference type="GeneID" id="66894709"/>
<dbReference type="eggNOG" id="COG4106">
    <property type="taxonomic scope" value="Bacteria"/>
</dbReference>
<dbReference type="HOGENOM" id="CLU_037990_5_2_5"/>
<dbReference type="PhylomeDB" id="Q6N3T8"/>
<dbReference type="GO" id="GO:0005737">
    <property type="term" value="C:cytoplasm"/>
    <property type="evidence" value="ECO:0007669"/>
    <property type="project" value="UniProtKB-SubCell"/>
</dbReference>
<dbReference type="GO" id="GO:0030798">
    <property type="term" value="F:trans-aconitate 2-methyltransferase activity"/>
    <property type="evidence" value="ECO:0007669"/>
    <property type="project" value="UniProtKB-UniRule"/>
</dbReference>
<dbReference type="GO" id="GO:0032259">
    <property type="term" value="P:methylation"/>
    <property type="evidence" value="ECO:0007669"/>
    <property type="project" value="UniProtKB-KW"/>
</dbReference>
<dbReference type="CDD" id="cd02440">
    <property type="entry name" value="AdoMet_MTases"/>
    <property type="match status" value="1"/>
</dbReference>
<dbReference type="Gene3D" id="1.10.150.290">
    <property type="entry name" value="S-adenosyl-L-methionine-dependent methyltransferases"/>
    <property type="match status" value="1"/>
</dbReference>
<dbReference type="Gene3D" id="3.40.50.150">
    <property type="entry name" value="Vaccinia Virus protein VP39"/>
    <property type="match status" value="1"/>
</dbReference>
<dbReference type="HAMAP" id="MF_00560">
    <property type="entry name" value="Tran_acon_Me_trans"/>
    <property type="match status" value="1"/>
</dbReference>
<dbReference type="InterPro" id="IPR041698">
    <property type="entry name" value="Methyltransf_25"/>
</dbReference>
<dbReference type="InterPro" id="IPR029063">
    <property type="entry name" value="SAM-dependent_MTases_sf"/>
</dbReference>
<dbReference type="InterPro" id="IPR023506">
    <property type="entry name" value="Trans-aconitate_MeTrfase"/>
</dbReference>
<dbReference type="InterPro" id="IPR023149">
    <property type="entry name" value="Trans_acon_MeTrfase_C"/>
</dbReference>
<dbReference type="NCBIfam" id="NF002463">
    <property type="entry name" value="PRK01683.1"/>
    <property type="match status" value="1"/>
</dbReference>
<dbReference type="PANTHER" id="PTHR43861:SF1">
    <property type="entry name" value="TRANS-ACONITATE 2-METHYLTRANSFERASE"/>
    <property type="match status" value="1"/>
</dbReference>
<dbReference type="PANTHER" id="PTHR43861">
    <property type="entry name" value="TRANS-ACONITATE 2-METHYLTRANSFERASE-RELATED"/>
    <property type="match status" value="1"/>
</dbReference>
<dbReference type="Pfam" id="PF13649">
    <property type="entry name" value="Methyltransf_25"/>
    <property type="match status" value="1"/>
</dbReference>
<dbReference type="SUPFAM" id="SSF53335">
    <property type="entry name" value="S-adenosyl-L-methionine-dependent methyltransferases"/>
    <property type="match status" value="1"/>
</dbReference>
<reference key="1">
    <citation type="journal article" date="2004" name="Nat. Biotechnol.">
        <title>Complete genome sequence of the metabolically versatile photosynthetic bacterium Rhodopseudomonas palustris.</title>
        <authorList>
            <person name="Larimer F.W."/>
            <person name="Chain P."/>
            <person name="Hauser L."/>
            <person name="Lamerdin J.E."/>
            <person name="Malfatti S."/>
            <person name="Do L."/>
            <person name="Land M.L."/>
            <person name="Pelletier D.A."/>
            <person name="Beatty J.T."/>
            <person name="Lang A.S."/>
            <person name="Tabita F.R."/>
            <person name="Gibson J.L."/>
            <person name="Hanson T.E."/>
            <person name="Bobst C."/>
            <person name="Torres y Torres J.L."/>
            <person name="Peres C."/>
            <person name="Harrison F.H."/>
            <person name="Gibson J."/>
            <person name="Harwood C.S."/>
        </authorList>
    </citation>
    <scope>NUCLEOTIDE SEQUENCE [LARGE SCALE GENOMIC DNA]</scope>
    <source>
        <strain>ATCC BAA-98 / CGA009</strain>
    </source>
</reference>
<gene>
    <name evidence="1" type="primary">tam</name>
    <name type="ordered locus">RPA3605</name>
</gene>
<feature type="chain" id="PRO_1000056576" description="Trans-aconitate 2-methyltransferase">
    <location>
        <begin position="1"/>
        <end position="256"/>
    </location>
</feature>
<accession>Q6N3T8</accession>